<comment type="function">
    <text evidence="1">Transfers 2-(5''-triphosphoribosyl)-3'-dephosphocoenzyme-A on a serine residue to the apo-acyl carrier protein (gamma chain) of the citrate lyase to yield holo-acyl carrier protein.</text>
</comment>
<comment type="catalytic activity">
    <reaction evidence="1">
        <text>apo-[citrate lyase ACP] + 2'-(5''-triphospho-alpha-D-ribosyl)-3'-dephospho-CoA = holo-[citrate lyase ACP] + diphosphate</text>
        <dbReference type="Rhea" id="RHEA:16333"/>
        <dbReference type="Rhea" id="RHEA-COMP:10157"/>
        <dbReference type="Rhea" id="RHEA-COMP:10158"/>
        <dbReference type="ChEBI" id="CHEBI:29999"/>
        <dbReference type="ChEBI" id="CHEBI:33019"/>
        <dbReference type="ChEBI" id="CHEBI:61378"/>
        <dbReference type="ChEBI" id="CHEBI:82683"/>
        <dbReference type="EC" id="2.7.7.61"/>
    </reaction>
</comment>
<comment type="similarity">
    <text evidence="1">Belongs to the CitX family.</text>
</comment>
<organism>
    <name type="scientific">Escherichia coli (strain SE11)</name>
    <dbReference type="NCBI Taxonomy" id="409438"/>
    <lineage>
        <taxon>Bacteria</taxon>
        <taxon>Pseudomonadati</taxon>
        <taxon>Pseudomonadota</taxon>
        <taxon>Gammaproteobacteria</taxon>
        <taxon>Enterobacterales</taxon>
        <taxon>Enterobacteriaceae</taxon>
        <taxon>Escherichia</taxon>
    </lineage>
</organism>
<protein>
    <recommendedName>
        <fullName>Apo-citrate lyase phosphoribosyl-dephospho-CoA transferase</fullName>
        <ecNumber evidence="1">2.7.7.61</ecNumber>
    </recommendedName>
    <alternativeName>
        <fullName evidence="1">Apo-ACP nucleodityltransferase</fullName>
    </alternativeName>
    <alternativeName>
        <fullName evidence="1">Holo-ACP synthase</fullName>
    </alternativeName>
    <alternativeName>
        <fullName evidence="1">Holo-citrate lyase synthase</fullName>
    </alternativeName>
</protein>
<keyword id="KW-0548">Nucleotidyltransferase</keyword>
<keyword id="KW-0808">Transferase</keyword>
<dbReference type="EC" id="2.7.7.61" evidence="1"/>
<dbReference type="EMBL" id="AP009240">
    <property type="protein sequence ID" value="BAG76206.1"/>
    <property type="molecule type" value="Genomic_DNA"/>
</dbReference>
<dbReference type="RefSeq" id="WP_000550422.1">
    <property type="nucleotide sequence ID" value="NC_011415.1"/>
</dbReference>
<dbReference type="SMR" id="B6I0S3"/>
<dbReference type="GeneID" id="93776871"/>
<dbReference type="KEGG" id="ecy:ECSE_0682"/>
<dbReference type="HOGENOM" id="CLU_104529_1_1_6"/>
<dbReference type="Proteomes" id="UP000008199">
    <property type="component" value="Chromosome"/>
</dbReference>
<dbReference type="GO" id="GO:0050519">
    <property type="term" value="F:holo-citrate lyase synthase activity"/>
    <property type="evidence" value="ECO:0007669"/>
    <property type="project" value="UniProtKB-UniRule"/>
</dbReference>
<dbReference type="GO" id="GO:0051191">
    <property type="term" value="P:prosthetic group biosynthetic process"/>
    <property type="evidence" value="ECO:0007669"/>
    <property type="project" value="InterPro"/>
</dbReference>
<dbReference type="HAMAP" id="MF_00398">
    <property type="entry name" value="CitX"/>
    <property type="match status" value="1"/>
</dbReference>
<dbReference type="InterPro" id="IPR005551">
    <property type="entry name" value="CitX"/>
</dbReference>
<dbReference type="NCBIfam" id="TIGR03124">
    <property type="entry name" value="citrate_citX"/>
    <property type="match status" value="1"/>
</dbReference>
<dbReference type="NCBIfam" id="NF002383">
    <property type="entry name" value="PRK01392.1"/>
    <property type="match status" value="1"/>
</dbReference>
<dbReference type="Pfam" id="PF03802">
    <property type="entry name" value="CitX"/>
    <property type="match status" value="1"/>
</dbReference>
<gene>
    <name evidence="1" type="primary">citX</name>
    <name type="ordered locus">ECSE_0682</name>
</gene>
<accession>B6I0S3</accession>
<reference key="1">
    <citation type="journal article" date="2008" name="DNA Res.">
        <title>Complete genome sequence and comparative analysis of the wild-type commensal Escherichia coli strain SE11 isolated from a healthy adult.</title>
        <authorList>
            <person name="Oshima K."/>
            <person name="Toh H."/>
            <person name="Ogura Y."/>
            <person name="Sasamoto H."/>
            <person name="Morita H."/>
            <person name="Park S.-H."/>
            <person name="Ooka T."/>
            <person name="Iyoda S."/>
            <person name="Taylor T.D."/>
            <person name="Hayashi T."/>
            <person name="Itoh K."/>
            <person name="Hattori M."/>
        </authorList>
    </citation>
    <scope>NUCLEOTIDE SEQUENCE [LARGE SCALE GENOMIC DNA]</scope>
    <source>
        <strain>SE11</strain>
    </source>
</reference>
<sequence>MHLLPELASHHAVSIPELLVSRDERQARQHVWLKRHPVPLVSFTVVAPGPIKDSEVTRRIFNHGVTALRALAAKQGWQIQEQAALVSASGPEGMLSIAAPARDLKLATIELEHSHPLGRLWDIDVLTPEGEILSRRDYSLPPRRCLLCEQSAAVCARGKTHQLTDLLNRMEALLNDVDACNVN</sequence>
<evidence type="ECO:0000255" key="1">
    <source>
        <dbReference type="HAMAP-Rule" id="MF_00398"/>
    </source>
</evidence>
<name>CITX_ECOSE</name>
<proteinExistence type="inferred from homology"/>
<feature type="chain" id="PRO_1000189599" description="Apo-citrate lyase phosphoribosyl-dephospho-CoA transferase">
    <location>
        <begin position="1"/>
        <end position="183"/>
    </location>
</feature>